<comment type="function">
    <text evidence="1">Produces ATP from ADP in the presence of a proton gradient across the membrane. The catalytic sites are hosted primarily by the beta subunits.</text>
</comment>
<comment type="catalytic activity">
    <reaction evidence="1">
        <text>ATP + H2O + 4 H(+)(in) = ADP + phosphate + 5 H(+)(out)</text>
        <dbReference type="Rhea" id="RHEA:57720"/>
        <dbReference type="ChEBI" id="CHEBI:15377"/>
        <dbReference type="ChEBI" id="CHEBI:15378"/>
        <dbReference type="ChEBI" id="CHEBI:30616"/>
        <dbReference type="ChEBI" id="CHEBI:43474"/>
        <dbReference type="ChEBI" id="CHEBI:456216"/>
        <dbReference type="EC" id="7.1.2.2"/>
    </reaction>
</comment>
<comment type="subunit">
    <text evidence="1">F-type ATPases have 2 components, CF(1) - the catalytic core - and CF(0) - the membrane proton channel. CF(1) has five subunits: alpha(3), beta(3), gamma(1), delta(1), epsilon(1). CF(0) has three main subunits: a(1), b(2) and c(9-12). The alpha and beta chains form an alternating ring which encloses part of the gamma chain. CF(1) is attached to CF(0) by a central stalk formed by the gamma and epsilon chains, while a peripheral stalk is formed by the delta and b chains.</text>
</comment>
<comment type="subcellular location">
    <subcellularLocation>
        <location evidence="1">Cell inner membrane</location>
        <topology evidence="1">Peripheral membrane protein</topology>
    </subcellularLocation>
</comment>
<comment type="similarity">
    <text evidence="1">Belongs to the ATPase alpha/beta chains family.</text>
</comment>
<accession>Q6CYJ5</accession>
<dbReference type="EC" id="7.1.2.2" evidence="1"/>
<dbReference type="EMBL" id="BX950851">
    <property type="protein sequence ID" value="CAG77407.1"/>
    <property type="molecule type" value="Genomic_DNA"/>
</dbReference>
<dbReference type="RefSeq" id="WP_011095966.1">
    <property type="nucleotide sequence ID" value="NC_004547.2"/>
</dbReference>
<dbReference type="SMR" id="Q6CYJ5"/>
<dbReference type="STRING" id="218491.ECA4512"/>
<dbReference type="GeneID" id="57211198"/>
<dbReference type="KEGG" id="eca:ECA4512"/>
<dbReference type="eggNOG" id="COG0055">
    <property type="taxonomic scope" value="Bacteria"/>
</dbReference>
<dbReference type="HOGENOM" id="CLU_022398_0_2_6"/>
<dbReference type="OrthoDB" id="9801639at2"/>
<dbReference type="Proteomes" id="UP000007966">
    <property type="component" value="Chromosome"/>
</dbReference>
<dbReference type="GO" id="GO:0005886">
    <property type="term" value="C:plasma membrane"/>
    <property type="evidence" value="ECO:0007669"/>
    <property type="project" value="UniProtKB-SubCell"/>
</dbReference>
<dbReference type="GO" id="GO:0045259">
    <property type="term" value="C:proton-transporting ATP synthase complex"/>
    <property type="evidence" value="ECO:0007669"/>
    <property type="project" value="UniProtKB-KW"/>
</dbReference>
<dbReference type="GO" id="GO:0005524">
    <property type="term" value="F:ATP binding"/>
    <property type="evidence" value="ECO:0007669"/>
    <property type="project" value="UniProtKB-UniRule"/>
</dbReference>
<dbReference type="GO" id="GO:0016887">
    <property type="term" value="F:ATP hydrolysis activity"/>
    <property type="evidence" value="ECO:0007669"/>
    <property type="project" value="InterPro"/>
</dbReference>
<dbReference type="GO" id="GO:0046933">
    <property type="term" value="F:proton-transporting ATP synthase activity, rotational mechanism"/>
    <property type="evidence" value="ECO:0007669"/>
    <property type="project" value="UniProtKB-UniRule"/>
</dbReference>
<dbReference type="CDD" id="cd18110">
    <property type="entry name" value="ATP-synt_F1_beta_C"/>
    <property type="match status" value="1"/>
</dbReference>
<dbReference type="CDD" id="cd18115">
    <property type="entry name" value="ATP-synt_F1_beta_N"/>
    <property type="match status" value="1"/>
</dbReference>
<dbReference type="CDD" id="cd01133">
    <property type="entry name" value="F1-ATPase_beta_CD"/>
    <property type="match status" value="1"/>
</dbReference>
<dbReference type="FunFam" id="1.10.1140.10:FF:000001">
    <property type="entry name" value="ATP synthase subunit beta"/>
    <property type="match status" value="1"/>
</dbReference>
<dbReference type="FunFam" id="2.40.10.170:FF:000003">
    <property type="entry name" value="ATP synthase subunit beta"/>
    <property type="match status" value="1"/>
</dbReference>
<dbReference type="FunFam" id="3.40.50.300:FF:000004">
    <property type="entry name" value="ATP synthase subunit beta"/>
    <property type="match status" value="1"/>
</dbReference>
<dbReference type="Gene3D" id="2.40.10.170">
    <property type="match status" value="1"/>
</dbReference>
<dbReference type="Gene3D" id="1.10.1140.10">
    <property type="entry name" value="Bovine Mitochondrial F1-atpase, Atp Synthase Beta Chain, Chain D, domain 3"/>
    <property type="match status" value="1"/>
</dbReference>
<dbReference type="Gene3D" id="3.40.50.300">
    <property type="entry name" value="P-loop containing nucleotide triphosphate hydrolases"/>
    <property type="match status" value="1"/>
</dbReference>
<dbReference type="HAMAP" id="MF_01347">
    <property type="entry name" value="ATP_synth_beta_bact"/>
    <property type="match status" value="1"/>
</dbReference>
<dbReference type="InterPro" id="IPR003593">
    <property type="entry name" value="AAA+_ATPase"/>
</dbReference>
<dbReference type="InterPro" id="IPR055190">
    <property type="entry name" value="ATP-synt_VA_C"/>
</dbReference>
<dbReference type="InterPro" id="IPR005722">
    <property type="entry name" value="ATP_synth_F1_bsu"/>
</dbReference>
<dbReference type="InterPro" id="IPR020003">
    <property type="entry name" value="ATPase_a/bsu_AS"/>
</dbReference>
<dbReference type="InterPro" id="IPR050053">
    <property type="entry name" value="ATPase_alpha/beta_chains"/>
</dbReference>
<dbReference type="InterPro" id="IPR004100">
    <property type="entry name" value="ATPase_F1/V1/A1_a/bsu_N"/>
</dbReference>
<dbReference type="InterPro" id="IPR036121">
    <property type="entry name" value="ATPase_F1/V1/A1_a/bsu_N_sf"/>
</dbReference>
<dbReference type="InterPro" id="IPR000194">
    <property type="entry name" value="ATPase_F1/V1/A1_a/bsu_nucl-bd"/>
</dbReference>
<dbReference type="InterPro" id="IPR024034">
    <property type="entry name" value="ATPase_F1/V1_b/a_C"/>
</dbReference>
<dbReference type="InterPro" id="IPR027417">
    <property type="entry name" value="P-loop_NTPase"/>
</dbReference>
<dbReference type="NCBIfam" id="TIGR01039">
    <property type="entry name" value="atpD"/>
    <property type="match status" value="1"/>
</dbReference>
<dbReference type="PANTHER" id="PTHR15184">
    <property type="entry name" value="ATP SYNTHASE"/>
    <property type="match status" value="1"/>
</dbReference>
<dbReference type="PANTHER" id="PTHR15184:SF71">
    <property type="entry name" value="ATP SYNTHASE SUBUNIT BETA, MITOCHONDRIAL"/>
    <property type="match status" value="1"/>
</dbReference>
<dbReference type="Pfam" id="PF00006">
    <property type="entry name" value="ATP-synt_ab"/>
    <property type="match status" value="1"/>
</dbReference>
<dbReference type="Pfam" id="PF02874">
    <property type="entry name" value="ATP-synt_ab_N"/>
    <property type="match status" value="1"/>
</dbReference>
<dbReference type="Pfam" id="PF22919">
    <property type="entry name" value="ATP-synt_VA_C"/>
    <property type="match status" value="1"/>
</dbReference>
<dbReference type="SMART" id="SM00382">
    <property type="entry name" value="AAA"/>
    <property type="match status" value="1"/>
</dbReference>
<dbReference type="SUPFAM" id="SSF47917">
    <property type="entry name" value="C-terminal domain of alpha and beta subunits of F1 ATP synthase"/>
    <property type="match status" value="1"/>
</dbReference>
<dbReference type="SUPFAM" id="SSF50615">
    <property type="entry name" value="N-terminal domain of alpha and beta subunits of F1 ATP synthase"/>
    <property type="match status" value="1"/>
</dbReference>
<dbReference type="SUPFAM" id="SSF52540">
    <property type="entry name" value="P-loop containing nucleoside triphosphate hydrolases"/>
    <property type="match status" value="1"/>
</dbReference>
<dbReference type="PROSITE" id="PS00152">
    <property type="entry name" value="ATPASE_ALPHA_BETA"/>
    <property type="match status" value="1"/>
</dbReference>
<proteinExistence type="inferred from homology"/>
<protein>
    <recommendedName>
        <fullName evidence="1">ATP synthase subunit beta</fullName>
        <ecNumber evidence="1">7.1.2.2</ecNumber>
    </recommendedName>
    <alternativeName>
        <fullName evidence="1">ATP synthase F1 sector subunit beta</fullName>
    </alternativeName>
    <alternativeName>
        <fullName evidence="1">F-ATPase subunit beta</fullName>
    </alternativeName>
</protein>
<evidence type="ECO:0000255" key="1">
    <source>
        <dbReference type="HAMAP-Rule" id="MF_01347"/>
    </source>
</evidence>
<reference key="1">
    <citation type="journal article" date="2004" name="Proc. Natl. Acad. Sci. U.S.A.">
        <title>Genome sequence of the enterobacterial phytopathogen Erwinia carotovora subsp. atroseptica and characterization of virulence factors.</title>
        <authorList>
            <person name="Bell K.S."/>
            <person name="Sebaihia M."/>
            <person name="Pritchard L."/>
            <person name="Holden M.T.G."/>
            <person name="Hyman L.J."/>
            <person name="Holeva M.C."/>
            <person name="Thomson N.R."/>
            <person name="Bentley S.D."/>
            <person name="Churcher L.J.C."/>
            <person name="Mungall K."/>
            <person name="Atkin R."/>
            <person name="Bason N."/>
            <person name="Brooks K."/>
            <person name="Chillingworth T."/>
            <person name="Clark K."/>
            <person name="Doggett J."/>
            <person name="Fraser A."/>
            <person name="Hance Z."/>
            <person name="Hauser H."/>
            <person name="Jagels K."/>
            <person name="Moule S."/>
            <person name="Norbertczak H."/>
            <person name="Ormond D."/>
            <person name="Price C."/>
            <person name="Quail M.A."/>
            <person name="Sanders M."/>
            <person name="Walker D."/>
            <person name="Whitehead S."/>
            <person name="Salmond G.P.C."/>
            <person name="Birch P.R.J."/>
            <person name="Parkhill J."/>
            <person name="Toth I.K."/>
        </authorList>
    </citation>
    <scope>NUCLEOTIDE SEQUENCE [LARGE SCALE GENOMIC DNA]</scope>
    <source>
        <strain>SCRI 1043 / ATCC BAA-672</strain>
    </source>
</reference>
<organism>
    <name type="scientific">Pectobacterium atrosepticum (strain SCRI 1043 / ATCC BAA-672)</name>
    <name type="common">Erwinia carotovora subsp. atroseptica</name>
    <dbReference type="NCBI Taxonomy" id="218491"/>
    <lineage>
        <taxon>Bacteria</taxon>
        <taxon>Pseudomonadati</taxon>
        <taxon>Pseudomonadota</taxon>
        <taxon>Gammaproteobacteria</taxon>
        <taxon>Enterobacterales</taxon>
        <taxon>Pectobacteriaceae</taxon>
        <taxon>Pectobacterium</taxon>
    </lineage>
</organism>
<gene>
    <name evidence="1" type="primary">atpD</name>
    <name type="ordered locus">ECA4512</name>
</gene>
<keyword id="KW-0066">ATP synthesis</keyword>
<keyword id="KW-0067">ATP-binding</keyword>
<keyword id="KW-0997">Cell inner membrane</keyword>
<keyword id="KW-1003">Cell membrane</keyword>
<keyword id="KW-0139">CF(1)</keyword>
<keyword id="KW-0375">Hydrogen ion transport</keyword>
<keyword id="KW-0406">Ion transport</keyword>
<keyword id="KW-0472">Membrane</keyword>
<keyword id="KW-0547">Nucleotide-binding</keyword>
<keyword id="KW-1185">Reference proteome</keyword>
<keyword id="KW-1278">Translocase</keyword>
<keyword id="KW-0813">Transport</keyword>
<feature type="chain" id="PRO_0000254260" description="ATP synthase subunit beta">
    <location>
        <begin position="1"/>
        <end position="460"/>
    </location>
</feature>
<feature type="binding site" evidence="1">
    <location>
        <begin position="150"/>
        <end position="157"/>
    </location>
    <ligand>
        <name>ATP</name>
        <dbReference type="ChEBI" id="CHEBI:30616"/>
    </ligand>
</feature>
<sequence length="460" mass="50185">MATGKIIQVIGAVVDVEFPQDAVPKVYDALEVENGAEKLVLEVQQQLGGGIVRCIAMGSSDGLRRGLNVNNLGHPIEVPVGKATLGRIMNVLGDPIDMKGDIGEEERWAIHRSAPSYEELSNSQELLETGIKVIDLMCPFAKGGKVGLFGGAGVGKTVNMMELIRNIAIEHSGYSVFAGVGERTREGNDFYHEMTDSNVIDKVSLVYGQMNEPPGNRLRVALTGLTMAEKFRDEGRDVLLFVDNIYRYTLAGTEVSALLGRMPSAVGYQPTLAEEMGVLQERITSTKTGSITSVQAVYVPADDLTDPSPATTFAHLDATVVLSRQIASLGIYPAVDPLDSTSRQLDPLVVGQEHYDVARGVQSILQRYQELKDIIAILGMDELSEEDKLVVSRARKIQRFLSQPFFVAEVFTGSPGKYVSLKDTIRGFKGIMEGEYDHLPEQAFYMVGSIDEVVEKAKKL</sequence>
<name>ATPB_PECAS</name>